<organism>
    <name type="scientific">Salmonella choleraesuis (strain SC-B67)</name>
    <dbReference type="NCBI Taxonomy" id="321314"/>
    <lineage>
        <taxon>Bacteria</taxon>
        <taxon>Pseudomonadati</taxon>
        <taxon>Pseudomonadota</taxon>
        <taxon>Gammaproteobacteria</taxon>
        <taxon>Enterobacterales</taxon>
        <taxon>Enterobacteriaceae</taxon>
        <taxon>Salmonella</taxon>
    </lineage>
</organism>
<name>NANA_SALCH</name>
<gene>
    <name evidence="1" type="primary">nanA</name>
    <name type="ordered locus">SCH_3277</name>
</gene>
<evidence type="ECO:0000255" key="1">
    <source>
        <dbReference type="HAMAP-Rule" id="MF_01237"/>
    </source>
</evidence>
<dbReference type="EC" id="4.1.3.3" evidence="1"/>
<dbReference type="EMBL" id="AE017220">
    <property type="protein sequence ID" value="AAX67183.1"/>
    <property type="molecule type" value="Genomic_DNA"/>
</dbReference>
<dbReference type="RefSeq" id="WP_001029665.1">
    <property type="nucleotide sequence ID" value="NC_006905.1"/>
</dbReference>
<dbReference type="SMR" id="Q57JC9"/>
<dbReference type="KEGG" id="sec:SCH_3277"/>
<dbReference type="HOGENOM" id="CLU_049343_6_0_6"/>
<dbReference type="UniPathway" id="UPA00629">
    <property type="reaction ID" value="UER00680"/>
</dbReference>
<dbReference type="Proteomes" id="UP000000538">
    <property type="component" value="Chromosome"/>
</dbReference>
<dbReference type="GO" id="GO:0005829">
    <property type="term" value="C:cytosol"/>
    <property type="evidence" value="ECO:0007669"/>
    <property type="project" value="TreeGrafter"/>
</dbReference>
<dbReference type="GO" id="GO:0008747">
    <property type="term" value="F:N-acetylneuraminate lyase activity"/>
    <property type="evidence" value="ECO:0007669"/>
    <property type="project" value="UniProtKB-UniRule"/>
</dbReference>
<dbReference type="GO" id="GO:0005975">
    <property type="term" value="P:carbohydrate metabolic process"/>
    <property type="evidence" value="ECO:0007669"/>
    <property type="project" value="UniProtKB-UniRule"/>
</dbReference>
<dbReference type="GO" id="GO:0019262">
    <property type="term" value="P:N-acetylneuraminate catabolic process"/>
    <property type="evidence" value="ECO:0007669"/>
    <property type="project" value="UniProtKB-UniRule"/>
</dbReference>
<dbReference type="CDD" id="cd00954">
    <property type="entry name" value="NAL"/>
    <property type="match status" value="1"/>
</dbReference>
<dbReference type="FunFam" id="3.20.20.70:FF:000039">
    <property type="entry name" value="N-acetylneuraminate lyase"/>
    <property type="match status" value="1"/>
</dbReference>
<dbReference type="Gene3D" id="3.20.20.70">
    <property type="entry name" value="Aldolase class I"/>
    <property type="match status" value="1"/>
</dbReference>
<dbReference type="HAMAP" id="MF_01237">
    <property type="entry name" value="N_acetylneuram_lyase"/>
    <property type="match status" value="1"/>
</dbReference>
<dbReference type="InterPro" id="IPR013785">
    <property type="entry name" value="Aldolase_TIM"/>
</dbReference>
<dbReference type="InterPro" id="IPR002220">
    <property type="entry name" value="DapA-like"/>
</dbReference>
<dbReference type="InterPro" id="IPR005264">
    <property type="entry name" value="NanA"/>
</dbReference>
<dbReference type="InterPro" id="IPR020625">
    <property type="entry name" value="Schiff_base-form_aldolases_AS"/>
</dbReference>
<dbReference type="InterPro" id="IPR020624">
    <property type="entry name" value="Schiff_base-form_aldolases_CS"/>
</dbReference>
<dbReference type="NCBIfam" id="TIGR00683">
    <property type="entry name" value="nanA"/>
    <property type="match status" value="1"/>
</dbReference>
<dbReference type="NCBIfam" id="NF003164">
    <property type="entry name" value="PRK04147.1"/>
    <property type="match status" value="1"/>
</dbReference>
<dbReference type="PANTHER" id="PTHR42849">
    <property type="entry name" value="N-ACETYLNEURAMINATE LYASE"/>
    <property type="match status" value="1"/>
</dbReference>
<dbReference type="PANTHER" id="PTHR42849:SF1">
    <property type="entry name" value="N-ACETYLNEURAMINATE LYASE"/>
    <property type="match status" value="1"/>
</dbReference>
<dbReference type="Pfam" id="PF00701">
    <property type="entry name" value="DHDPS"/>
    <property type="match status" value="1"/>
</dbReference>
<dbReference type="PIRSF" id="PIRSF001365">
    <property type="entry name" value="DHDPS"/>
    <property type="match status" value="1"/>
</dbReference>
<dbReference type="PRINTS" id="PR00146">
    <property type="entry name" value="DHPICSNTHASE"/>
</dbReference>
<dbReference type="SMART" id="SM01130">
    <property type="entry name" value="DHDPS"/>
    <property type="match status" value="1"/>
</dbReference>
<dbReference type="SUPFAM" id="SSF51569">
    <property type="entry name" value="Aldolase"/>
    <property type="match status" value="1"/>
</dbReference>
<dbReference type="PROSITE" id="PS00665">
    <property type="entry name" value="DHDPS_1"/>
    <property type="match status" value="1"/>
</dbReference>
<dbReference type="PROSITE" id="PS00666">
    <property type="entry name" value="DHDPS_2"/>
    <property type="match status" value="1"/>
</dbReference>
<comment type="function">
    <text evidence="1">Catalyzes the reversible aldol cleavage of N-acetylneuraminic acid (sialic acid; Neu5Ac) to form pyruvate and N-acetylmannosamine (ManNAc) via a Schiff base intermediate.</text>
</comment>
<comment type="catalytic activity">
    <reaction evidence="1">
        <text>aceneuramate = aldehydo-N-acetyl-D-mannosamine + pyruvate</text>
        <dbReference type="Rhea" id="RHEA:23296"/>
        <dbReference type="ChEBI" id="CHEBI:15361"/>
        <dbReference type="ChEBI" id="CHEBI:17122"/>
        <dbReference type="ChEBI" id="CHEBI:173083"/>
        <dbReference type="EC" id="4.1.3.3"/>
    </reaction>
</comment>
<comment type="pathway">
    <text evidence="1">Amino-sugar metabolism; N-acetylneuraminate degradation; D-fructose 6-phosphate from N-acetylneuraminate: step 1/5.</text>
</comment>
<comment type="subunit">
    <text evidence="1">Homotetramer.</text>
</comment>
<comment type="subcellular location">
    <subcellularLocation>
        <location evidence="1">Cytoplasm</location>
    </subcellularLocation>
</comment>
<comment type="similarity">
    <text evidence="1">Belongs to the DapA family. NanA subfamily.</text>
</comment>
<protein>
    <recommendedName>
        <fullName evidence="1">N-acetylneuraminate lyase</fullName>
        <shortName evidence="1">NAL</shortName>
        <shortName evidence="1">Neu5Ac lyase</shortName>
        <ecNumber evidence="1">4.1.3.3</ecNumber>
    </recommendedName>
    <alternativeName>
        <fullName evidence="1">N-acetylneuraminate pyruvate-lyase</fullName>
    </alternativeName>
    <alternativeName>
        <fullName evidence="1">N-acetylneuraminic acid aldolase</fullName>
    </alternativeName>
    <alternativeName>
        <fullName evidence="1">Sialate lyase</fullName>
    </alternativeName>
    <alternativeName>
        <fullName evidence="1">Sialic acid aldolase</fullName>
    </alternativeName>
    <alternativeName>
        <fullName evidence="1">Sialic acid lyase</fullName>
    </alternativeName>
</protein>
<proteinExistence type="inferred from homology"/>
<keyword id="KW-0119">Carbohydrate metabolism</keyword>
<keyword id="KW-0963">Cytoplasm</keyword>
<keyword id="KW-0456">Lyase</keyword>
<keyword id="KW-0704">Schiff base</keyword>
<accession>Q57JC9</accession>
<reference key="1">
    <citation type="journal article" date="2005" name="Nucleic Acids Res.">
        <title>The genome sequence of Salmonella enterica serovar Choleraesuis, a highly invasive and resistant zoonotic pathogen.</title>
        <authorList>
            <person name="Chiu C.-H."/>
            <person name="Tang P."/>
            <person name="Chu C."/>
            <person name="Hu S."/>
            <person name="Bao Q."/>
            <person name="Yu J."/>
            <person name="Chou Y.-Y."/>
            <person name="Wang H.-S."/>
            <person name="Lee Y.-S."/>
        </authorList>
    </citation>
    <scope>NUCLEOTIDE SEQUENCE [LARGE SCALE GENOMIC DNA]</scope>
    <source>
        <strain>SC-B67</strain>
    </source>
</reference>
<feature type="chain" id="PRO_1000066930" description="N-acetylneuraminate lyase">
    <location>
        <begin position="1"/>
        <end position="297"/>
    </location>
</feature>
<feature type="active site" description="Proton donor" evidence="1">
    <location>
        <position position="137"/>
    </location>
</feature>
<feature type="active site" description="Schiff-base intermediate with substrate" evidence="1">
    <location>
        <position position="165"/>
    </location>
</feature>
<feature type="binding site" evidence="1">
    <location>
        <position position="47"/>
    </location>
    <ligand>
        <name>aceneuramate</name>
        <dbReference type="ChEBI" id="CHEBI:173083"/>
    </ligand>
</feature>
<feature type="binding site" evidence="1">
    <location>
        <position position="48"/>
    </location>
    <ligand>
        <name>aceneuramate</name>
        <dbReference type="ChEBI" id="CHEBI:173083"/>
    </ligand>
</feature>
<feature type="binding site" evidence="1">
    <location>
        <position position="167"/>
    </location>
    <ligand>
        <name>aceneuramate</name>
        <dbReference type="ChEBI" id="CHEBI:173083"/>
    </ligand>
</feature>
<feature type="binding site" evidence="1">
    <location>
        <position position="189"/>
    </location>
    <ligand>
        <name>aceneuramate</name>
        <dbReference type="ChEBI" id="CHEBI:173083"/>
    </ligand>
</feature>
<feature type="binding site" evidence="1">
    <location>
        <position position="191"/>
    </location>
    <ligand>
        <name>aceneuramate</name>
        <dbReference type="ChEBI" id="CHEBI:173083"/>
    </ligand>
</feature>
<feature type="binding site" evidence="1">
    <location>
        <position position="192"/>
    </location>
    <ligand>
        <name>aceneuramate</name>
        <dbReference type="ChEBI" id="CHEBI:173083"/>
    </ligand>
</feature>
<feature type="binding site" evidence="1">
    <location>
        <position position="208"/>
    </location>
    <ligand>
        <name>aceneuramate</name>
        <dbReference type="ChEBI" id="CHEBI:173083"/>
    </ligand>
</feature>
<sequence>MAKALQGVMAALLTPFDHQQQLDSESLRRLVRFNIGQGIDGLYVGGSTGEAFVQSLAEREQVLEIVAEEAKGKITLIAHVGTVSTAESQQLASAAKRYGFDAVSAVTPFYYPFSFEEHCDHYRAIIDSADGLPMVVYNIPALSGVKLTLDQINTLVTLPGVSALKQTSGDLFQMEQIRRAHPDLVLYNGYDEIFASGLLAGADGGIGSTYNIMGWRYQGIVQALREGDVAKAQRLQTECNKVIDLLIKTGVFRGLKTVLHYMDVLSVPLCRKPFAPVDEKYLPALKALAQQLMEEKA</sequence>